<protein>
    <recommendedName>
        <fullName evidence="1">Leucyl/phenylalanyl-tRNA--protein transferase</fullName>
        <ecNumber evidence="1">2.3.2.6</ecNumber>
    </recommendedName>
    <alternativeName>
        <fullName evidence="1">L/F-transferase</fullName>
    </alternativeName>
    <alternativeName>
        <fullName evidence="1">Leucyltransferase</fullName>
    </alternativeName>
    <alternativeName>
        <fullName evidence="1">Phenyalanyltransferase</fullName>
    </alternativeName>
</protein>
<dbReference type="EC" id="2.3.2.6" evidence="1"/>
<dbReference type="EMBL" id="CP001043">
    <property type="protein sequence ID" value="ACC70844.1"/>
    <property type="molecule type" value="Genomic_DNA"/>
</dbReference>
<dbReference type="RefSeq" id="WP_012401054.1">
    <property type="nucleotide sequence ID" value="NC_010622.1"/>
</dbReference>
<dbReference type="SMR" id="B2JKL7"/>
<dbReference type="STRING" id="391038.Bphy_1662"/>
<dbReference type="KEGG" id="bph:Bphy_1662"/>
<dbReference type="eggNOG" id="COG2360">
    <property type="taxonomic scope" value="Bacteria"/>
</dbReference>
<dbReference type="HOGENOM" id="CLU_075045_0_0_4"/>
<dbReference type="OrthoDB" id="9790282at2"/>
<dbReference type="Proteomes" id="UP000001192">
    <property type="component" value="Chromosome 1"/>
</dbReference>
<dbReference type="GO" id="GO:0005737">
    <property type="term" value="C:cytoplasm"/>
    <property type="evidence" value="ECO:0007669"/>
    <property type="project" value="UniProtKB-SubCell"/>
</dbReference>
<dbReference type="GO" id="GO:0008914">
    <property type="term" value="F:leucyl-tRNA--protein transferase activity"/>
    <property type="evidence" value="ECO:0007669"/>
    <property type="project" value="UniProtKB-UniRule"/>
</dbReference>
<dbReference type="GO" id="GO:0030163">
    <property type="term" value="P:protein catabolic process"/>
    <property type="evidence" value="ECO:0007669"/>
    <property type="project" value="UniProtKB-UniRule"/>
</dbReference>
<dbReference type="Gene3D" id="3.40.630.70">
    <property type="entry name" value="Leucyl/phenylalanyl-tRNA-protein transferase, C-terminal domain"/>
    <property type="match status" value="1"/>
</dbReference>
<dbReference type="Gene3D" id="3.30.70.3550">
    <property type="entry name" value="Leucyl/phenylalanyl-tRNA-protein transferase, N-terminal domain"/>
    <property type="match status" value="1"/>
</dbReference>
<dbReference type="HAMAP" id="MF_00688">
    <property type="entry name" value="Leu_Phe_trans"/>
    <property type="match status" value="1"/>
</dbReference>
<dbReference type="InterPro" id="IPR016181">
    <property type="entry name" value="Acyl_CoA_acyltransferase"/>
</dbReference>
<dbReference type="InterPro" id="IPR004616">
    <property type="entry name" value="Leu/Phe-tRNA_Trfase"/>
</dbReference>
<dbReference type="InterPro" id="IPR042203">
    <property type="entry name" value="Leu/Phe-tRNA_Trfase_C"/>
</dbReference>
<dbReference type="InterPro" id="IPR042221">
    <property type="entry name" value="Leu/Phe-tRNA_Trfase_N"/>
</dbReference>
<dbReference type="NCBIfam" id="TIGR00667">
    <property type="entry name" value="aat"/>
    <property type="match status" value="1"/>
</dbReference>
<dbReference type="PANTHER" id="PTHR30098">
    <property type="entry name" value="LEUCYL/PHENYLALANYL-TRNA--PROTEIN TRANSFERASE"/>
    <property type="match status" value="1"/>
</dbReference>
<dbReference type="PANTHER" id="PTHR30098:SF2">
    <property type="entry name" value="LEUCYL_PHENYLALANYL-TRNA--PROTEIN TRANSFERASE"/>
    <property type="match status" value="1"/>
</dbReference>
<dbReference type="Pfam" id="PF03588">
    <property type="entry name" value="Leu_Phe_trans"/>
    <property type="match status" value="1"/>
</dbReference>
<dbReference type="SUPFAM" id="SSF55729">
    <property type="entry name" value="Acyl-CoA N-acyltransferases (Nat)"/>
    <property type="match status" value="1"/>
</dbReference>
<accession>B2JKL7</accession>
<comment type="function">
    <text evidence="1">Functions in the N-end rule pathway of protein degradation where it conjugates Leu, Phe and, less efficiently, Met from aminoacyl-tRNAs to the N-termini of proteins containing an N-terminal arginine or lysine.</text>
</comment>
<comment type="catalytic activity">
    <reaction evidence="1">
        <text>N-terminal L-lysyl-[protein] + L-leucyl-tRNA(Leu) = N-terminal L-leucyl-L-lysyl-[protein] + tRNA(Leu) + H(+)</text>
        <dbReference type="Rhea" id="RHEA:12340"/>
        <dbReference type="Rhea" id="RHEA-COMP:9613"/>
        <dbReference type="Rhea" id="RHEA-COMP:9622"/>
        <dbReference type="Rhea" id="RHEA-COMP:12670"/>
        <dbReference type="Rhea" id="RHEA-COMP:12671"/>
        <dbReference type="ChEBI" id="CHEBI:15378"/>
        <dbReference type="ChEBI" id="CHEBI:65249"/>
        <dbReference type="ChEBI" id="CHEBI:78442"/>
        <dbReference type="ChEBI" id="CHEBI:78494"/>
        <dbReference type="ChEBI" id="CHEBI:133043"/>
        <dbReference type="EC" id="2.3.2.6"/>
    </reaction>
</comment>
<comment type="catalytic activity">
    <reaction evidence="1">
        <text>N-terminal L-arginyl-[protein] + L-leucyl-tRNA(Leu) = N-terminal L-leucyl-L-arginyl-[protein] + tRNA(Leu) + H(+)</text>
        <dbReference type="Rhea" id="RHEA:50416"/>
        <dbReference type="Rhea" id="RHEA-COMP:9613"/>
        <dbReference type="Rhea" id="RHEA-COMP:9622"/>
        <dbReference type="Rhea" id="RHEA-COMP:12672"/>
        <dbReference type="Rhea" id="RHEA-COMP:12673"/>
        <dbReference type="ChEBI" id="CHEBI:15378"/>
        <dbReference type="ChEBI" id="CHEBI:64719"/>
        <dbReference type="ChEBI" id="CHEBI:78442"/>
        <dbReference type="ChEBI" id="CHEBI:78494"/>
        <dbReference type="ChEBI" id="CHEBI:133044"/>
        <dbReference type="EC" id="2.3.2.6"/>
    </reaction>
</comment>
<comment type="catalytic activity">
    <reaction evidence="1">
        <text>L-phenylalanyl-tRNA(Phe) + an N-terminal L-alpha-aminoacyl-[protein] = an N-terminal L-phenylalanyl-L-alpha-aminoacyl-[protein] + tRNA(Phe)</text>
        <dbReference type="Rhea" id="RHEA:43632"/>
        <dbReference type="Rhea" id="RHEA-COMP:9668"/>
        <dbReference type="Rhea" id="RHEA-COMP:9699"/>
        <dbReference type="Rhea" id="RHEA-COMP:10636"/>
        <dbReference type="Rhea" id="RHEA-COMP:10637"/>
        <dbReference type="ChEBI" id="CHEBI:78442"/>
        <dbReference type="ChEBI" id="CHEBI:78531"/>
        <dbReference type="ChEBI" id="CHEBI:78597"/>
        <dbReference type="ChEBI" id="CHEBI:83561"/>
        <dbReference type="EC" id="2.3.2.6"/>
    </reaction>
</comment>
<comment type="subcellular location">
    <subcellularLocation>
        <location evidence="1">Cytoplasm</location>
    </subcellularLocation>
</comment>
<comment type="similarity">
    <text evidence="1">Belongs to the L/F-transferase family.</text>
</comment>
<reference key="1">
    <citation type="journal article" date="2014" name="Stand. Genomic Sci.">
        <title>Complete genome sequence of Burkholderia phymatum STM815(T), a broad host range and efficient nitrogen-fixing symbiont of Mimosa species.</title>
        <authorList>
            <person name="Moulin L."/>
            <person name="Klonowska A."/>
            <person name="Caroline B."/>
            <person name="Booth K."/>
            <person name="Vriezen J.A."/>
            <person name="Melkonian R."/>
            <person name="James E.K."/>
            <person name="Young J.P."/>
            <person name="Bena G."/>
            <person name="Hauser L."/>
            <person name="Land M."/>
            <person name="Kyrpides N."/>
            <person name="Bruce D."/>
            <person name="Chain P."/>
            <person name="Copeland A."/>
            <person name="Pitluck S."/>
            <person name="Woyke T."/>
            <person name="Lizotte-Waniewski M."/>
            <person name="Bristow J."/>
            <person name="Riley M."/>
        </authorList>
    </citation>
    <scope>NUCLEOTIDE SEQUENCE [LARGE SCALE GENOMIC DNA]</scope>
    <source>
        <strain>DSM 17167 / CIP 108236 / LMG 21445 / STM815</strain>
    </source>
</reference>
<keyword id="KW-0012">Acyltransferase</keyword>
<keyword id="KW-0963">Cytoplasm</keyword>
<keyword id="KW-1185">Reference proteome</keyword>
<keyword id="KW-0808">Transferase</keyword>
<name>LFTR_PARP8</name>
<sequence length="245" mass="27353">MVPWLGPDDPFPPVERALSAASGAPGLLAASADLLPSRLIDAYRRGIFPWYSDGQPVLWWTPDPRMILRPREFKISPSLKKTLRRVLRDDTWEIRVDADFPAVMRACALAPRHGQRGTWITSDVIDAYSTLHRRGEAHSIETWHAGKRVGGLYGVSFGKMFFGESMYAEVTDASKIALSALVFHLRRHEIEMIDCQQNTSHLASLGGREIARKAFVAHVRAAVDSAPIPWSFDKSVLRDLLAPAQ</sequence>
<evidence type="ECO:0000255" key="1">
    <source>
        <dbReference type="HAMAP-Rule" id="MF_00688"/>
    </source>
</evidence>
<gene>
    <name evidence="1" type="primary">aat</name>
    <name type="ordered locus">Bphy_1662</name>
</gene>
<organism>
    <name type="scientific">Paraburkholderia phymatum (strain DSM 17167 / CIP 108236 / LMG 21445 / STM815)</name>
    <name type="common">Burkholderia phymatum</name>
    <dbReference type="NCBI Taxonomy" id="391038"/>
    <lineage>
        <taxon>Bacteria</taxon>
        <taxon>Pseudomonadati</taxon>
        <taxon>Pseudomonadota</taxon>
        <taxon>Betaproteobacteria</taxon>
        <taxon>Burkholderiales</taxon>
        <taxon>Burkholderiaceae</taxon>
        <taxon>Paraburkholderia</taxon>
    </lineage>
</organism>
<feature type="chain" id="PRO_1000131910" description="Leucyl/phenylalanyl-tRNA--protein transferase">
    <location>
        <begin position="1"/>
        <end position="245"/>
    </location>
</feature>
<proteinExistence type="inferred from homology"/>